<organism>
    <name type="scientific">Rattus norvegicus</name>
    <name type="common">Rat</name>
    <dbReference type="NCBI Taxonomy" id="10116"/>
    <lineage>
        <taxon>Eukaryota</taxon>
        <taxon>Metazoa</taxon>
        <taxon>Chordata</taxon>
        <taxon>Craniata</taxon>
        <taxon>Vertebrata</taxon>
        <taxon>Euteleostomi</taxon>
        <taxon>Mammalia</taxon>
        <taxon>Eutheria</taxon>
        <taxon>Euarchontoglires</taxon>
        <taxon>Glires</taxon>
        <taxon>Rodentia</taxon>
        <taxon>Myomorpha</taxon>
        <taxon>Muroidea</taxon>
        <taxon>Muridae</taxon>
        <taxon>Murinae</taxon>
        <taxon>Rattus</taxon>
    </lineage>
</organism>
<proteinExistence type="evidence at protein level"/>
<accession>Q62825</accession>
<accession>Q4QQU2</accession>
<protein>
    <recommendedName>
        <fullName>Exocyst complex component 3</fullName>
    </recommendedName>
    <alternativeName>
        <fullName>Exocyst complex component Sec6</fullName>
        <shortName>rSec6</shortName>
    </alternativeName>
</protein>
<name>EXOC3_RAT</name>
<gene>
    <name type="primary">Exoc3</name>
    <name type="synonym">Sec6</name>
    <name type="synonym">Sec6l1</name>
</gene>
<comment type="function">
    <text>Component of the exocyst complex involved in the docking of exocytic vesicles with fusion sites on the plasma membrane.</text>
</comment>
<comment type="subunit">
    <text evidence="1 2 5 6 7">The exocyst complex is composed of EXOC1, EXOC2, EXOC3, EXOC4, EXOC5, EXOC6, EXOC7 and EXOC8 (PubMed:9405631). Interacts with EXOC3L1 (By similarity). Interacts with BIRC6/bruce (By similarity). Interacts with MYRIP (By similarity). Interacts with SLC6A9 (PubMed:16181645).</text>
</comment>
<comment type="subcellular location">
    <subcellularLocation>
        <location evidence="4">Cytoplasm</location>
    </subcellularLocation>
    <subcellularLocation>
        <location evidence="4">Cytoplasm</location>
        <location evidence="4">Perinuclear region</location>
    </subcellularLocation>
    <subcellularLocation>
        <location evidence="4">Cell projection</location>
        <location evidence="4">Growth cone</location>
    </subcellularLocation>
    <subcellularLocation>
        <location evidence="4">Cell projection</location>
        <location evidence="4">Neuron projection</location>
    </subcellularLocation>
    <subcellularLocation>
        <location evidence="1">Midbody</location>
    </subcellularLocation>
    <subcellularLocation>
        <location evidence="1">Golgi apparatus</location>
    </subcellularLocation>
    <text evidence="1 4">Perinuclear in undifferentiated PC12 cells. Redistributes to growing neurites and growth cones during NGF-induced neuronal differentiation (PubMed:12954101). During mitosis, early recruitment to the midbody requires RALA, but not RALB, and EXOC2. In late stages of cytokinesis, localization to the midbody is RALB-dependent (By similarity).</text>
</comment>
<comment type="tissue specificity">
    <text evidence="7">Widely expressed, with highest levels in kidney, followed by brain (at protein level).</text>
</comment>
<comment type="similarity">
    <text evidence="8">Belongs to the SEC6 family.</text>
</comment>
<dbReference type="EMBL" id="U32575">
    <property type="protein sequence ID" value="AAA85505.1"/>
    <property type="molecule type" value="mRNA"/>
</dbReference>
<dbReference type="EMBL" id="BC097993">
    <property type="protein sequence ID" value="AAH97993.1"/>
    <property type="molecule type" value="mRNA"/>
</dbReference>
<dbReference type="RefSeq" id="NP_001020135.1">
    <property type="nucleotide sequence ID" value="NM_001024964.1"/>
</dbReference>
<dbReference type="RefSeq" id="XP_006227829.1">
    <property type="nucleotide sequence ID" value="XM_006227767.5"/>
</dbReference>
<dbReference type="RefSeq" id="XP_006227830.1">
    <property type="nucleotide sequence ID" value="XM_006227768.5"/>
</dbReference>
<dbReference type="SMR" id="Q62825"/>
<dbReference type="BioGRID" id="251644">
    <property type="interactions" value="2"/>
</dbReference>
<dbReference type="CORUM" id="Q62825"/>
<dbReference type="DIP" id="DIP-60432N"/>
<dbReference type="FunCoup" id="Q62825">
    <property type="interactions" value="3567"/>
</dbReference>
<dbReference type="IntAct" id="Q62825">
    <property type="interactions" value="2"/>
</dbReference>
<dbReference type="STRING" id="10116.ENSRNOP00000072705"/>
<dbReference type="iPTMnet" id="Q62825"/>
<dbReference type="PhosphoSitePlus" id="Q62825"/>
<dbReference type="jPOST" id="Q62825"/>
<dbReference type="PaxDb" id="10116-ENSRNOP00000020251"/>
<dbReference type="Ensembl" id="ENSRNOT00000077740.2">
    <property type="protein sequence ID" value="ENSRNOP00000072705.1"/>
    <property type="gene ID" value="ENSRNOG00000039776.4"/>
</dbReference>
<dbReference type="GeneID" id="252881"/>
<dbReference type="KEGG" id="rno:252881"/>
<dbReference type="UCSC" id="RGD:621790">
    <property type="organism name" value="rat"/>
</dbReference>
<dbReference type="AGR" id="RGD:621790"/>
<dbReference type="CTD" id="11336"/>
<dbReference type="RGD" id="621790">
    <property type="gene designation" value="Exoc3"/>
</dbReference>
<dbReference type="eggNOG" id="KOG2286">
    <property type="taxonomic scope" value="Eukaryota"/>
</dbReference>
<dbReference type="GeneTree" id="ENSGT01030000234613"/>
<dbReference type="HOGENOM" id="CLU_016260_1_0_1"/>
<dbReference type="InParanoid" id="Q62825"/>
<dbReference type="OMA" id="MNIGPKT"/>
<dbReference type="OrthoDB" id="10047020at2759"/>
<dbReference type="PhylomeDB" id="Q62825"/>
<dbReference type="TreeFam" id="TF314979"/>
<dbReference type="Reactome" id="R-RNO-264876">
    <property type="pathway name" value="Insulin processing"/>
</dbReference>
<dbReference type="Reactome" id="R-RNO-5620916">
    <property type="pathway name" value="VxPx cargo-targeting to cilium"/>
</dbReference>
<dbReference type="PRO" id="PR:Q62825"/>
<dbReference type="Proteomes" id="UP000002494">
    <property type="component" value="Chromosome 1"/>
</dbReference>
<dbReference type="Bgee" id="ENSRNOG00000039776">
    <property type="expression patterns" value="Expressed in skeletal muscle tissue and 19 other cell types or tissues"/>
</dbReference>
<dbReference type="GO" id="GO:0000145">
    <property type="term" value="C:exocyst"/>
    <property type="evidence" value="ECO:0000318"/>
    <property type="project" value="GO_Central"/>
</dbReference>
<dbReference type="GO" id="GO:0005794">
    <property type="term" value="C:Golgi apparatus"/>
    <property type="evidence" value="ECO:0007669"/>
    <property type="project" value="UniProtKB-SubCell"/>
</dbReference>
<dbReference type="GO" id="GO:0030426">
    <property type="term" value="C:growth cone"/>
    <property type="evidence" value="ECO:0007669"/>
    <property type="project" value="UniProtKB-SubCell"/>
</dbReference>
<dbReference type="GO" id="GO:0030496">
    <property type="term" value="C:midbody"/>
    <property type="evidence" value="ECO:0007669"/>
    <property type="project" value="UniProtKB-SubCell"/>
</dbReference>
<dbReference type="GO" id="GO:0048471">
    <property type="term" value="C:perinuclear region of cytoplasm"/>
    <property type="evidence" value="ECO:0007669"/>
    <property type="project" value="UniProtKB-SubCell"/>
</dbReference>
<dbReference type="GO" id="GO:0042734">
    <property type="term" value="C:presynaptic membrane"/>
    <property type="evidence" value="ECO:0000314"/>
    <property type="project" value="SynGO"/>
</dbReference>
<dbReference type="GO" id="GO:0000149">
    <property type="term" value="F:SNARE binding"/>
    <property type="evidence" value="ECO:0000318"/>
    <property type="project" value="GO_Central"/>
</dbReference>
<dbReference type="GO" id="GO:0051601">
    <property type="term" value="P:exocyst localization"/>
    <property type="evidence" value="ECO:0000318"/>
    <property type="project" value="GO_Central"/>
</dbReference>
<dbReference type="GO" id="GO:0006887">
    <property type="term" value="P:exocytosis"/>
    <property type="evidence" value="ECO:0000318"/>
    <property type="project" value="GO_Central"/>
</dbReference>
<dbReference type="GO" id="GO:0015031">
    <property type="term" value="P:protein transport"/>
    <property type="evidence" value="ECO:0007669"/>
    <property type="project" value="UniProtKB-KW"/>
</dbReference>
<dbReference type="FunFam" id="1.10.357.50:FF:000004">
    <property type="entry name" value="Exocyst complex component 3"/>
    <property type="match status" value="1"/>
</dbReference>
<dbReference type="FunFam" id="1.10.357.70:FF:000001">
    <property type="entry name" value="Exocyst complex component 3"/>
    <property type="match status" value="1"/>
</dbReference>
<dbReference type="Gene3D" id="1.10.357.50">
    <property type="match status" value="1"/>
</dbReference>
<dbReference type="Gene3D" id="1.10.357.70">
    <property type="entry name" value="Exocyst complex component Sec6, C-terminal domain"/>
    <property type="match status" value="1"/>
</dbReference>
<dbReference type="InterPro" id="IPR010326">
    <property type="entry name" value="EXOC3/Sec6"/>
</dbReference>
<dbReference type="InterPro" id="IPR042532">
    <property type="entry name" value="EXOC3/Sec6_C"/>
</dbReference>
<dbReference type="PANTHER" id="PTHR21292:SF13">
    <property type="entry name" value="EXOCYST COMPLEX COMPONENT 3"/>
    <property type="match status" value="1"/>
</dbReference>
<dbReference type="PANTHER" id="PTHR21292">
    <property type="entry name" value="EXOCYST COMPLEX COMPONENT SEC6-RELATED"/>
    <property type="match status" value="1"/>
</dbReference>
<dbReference type="Pfam" id="PF06046">
    <property type="entry name" value="Sec6"/>
    <property type="match status" value="1"/>
</dbReference>
<sequence length="755" mass="86497">MCKDSACFSTMKETDLEAVATAVQRVAGMLQRPDQLDKVEQYRRREARKKASVEARLKAAIQSQLDGVRTGLSQLHNALNDVKDIQQSLADVSKDWRQSINTIESLKDVKDAVVQHSQLAAAVENLKNIFSVPEIVRETQDLIEQGALLQAHRKLMDLECSRDGLMCEQYRMDSGNKRDMTLIHGYFGSTQGLSDELAKQLWMVLQRSLVTVRRDPTLLVSVVRIIEREEKIDRRILDRKKQTGFVPPGRPKNWKEKMFAVLDRTVTTRIEGTQADTRESDKMWLVRHLEIIRKYVLDDLVIAKNLLVQCFPPHYDIFKNLLSMYHQALSIRMQDLASEDLEANEIVSLLTWVLNTYTSAEMMGNVELAPEVDVNALEPLLSPNVVSELLDTYMSTLTSNIIAWLRKALETDKKDWSKETEPEADQDGYYQTTLPAIVFQMFEQNLQVAAQISEDLKTKVLVLCLQQMNSFLSRYKEEAQLYKEEHLRNRQHPHCYVQYMVAIINNCQTFKESIISLKRKYLKPETEESLCQSQPSMDGILDAIAKEGCSSLLEEVFLDLEQHLNELMTKKWMLGSNAVDIICVTVEDYFNDFAKIKKPYKKRMTAEAHRRVVVEYLRAVMQKRISFRSAEERKEGAEKMVREAEQLRFLFRKLASGFGEDADGHCDTIVAVAEVIKLTDPSLLYLEVSTLVSKYPDIRDDHIGALLALRGDASRDMKQTIMETLEQGPMQASPNYVPIFQEIVVPSLNVAKLLK</sequence>
<reference key="1">
    <citation type="journal article" date="1995" name="Proc. Natl. Acad. Sci. U.S.A.">
        <title>rSec6 and rSec8, mammalian homologs of yeast proteins essential for secretion.</title>
        <authorList>
            <person name="Ting A.E."/>
            <person name="Hazuka C.D."/>
            <person name="Hsu S.-C."/>
            <person name="Kirk M.D."/>
            <person name="Bean A.J."/>
            <person name="Scheller R.H."/>
        </authorList>
    </citation>
    <scope>NUCLEOTIDE SEQUENCE [MRNA]</scope>
    <scope>PARTIAL PROTEIN SEQUENCE</scope>
</reference>
<reference key="2">
    <citation type="journal article" date="2004" name="Genome Res.">
        <title>The status, quality, and expansion of the NIH full-length cDNA project: the Mammalian Gene Collection (MGC).</title>
        <authorList>
            <consortium name="The MGC Project Team"/>
        </authorList>
    </citation>
    <scope>NUCLEOTIDE SEQUENCE [LARGE SCALE MRNA]</scope>
    <source>
        <tissue>Placenta</tissue>
    </source>
</reference>
<reference key="3">
    <citation type="journal article" date="1997" name="Proc. Natl. Acad. Sci. U.S.A.">
        <title>Subunit structure of the mammalian exocyst complex.</title>
        <authorList>
            <person name="Kee Y."/>
            <person name="Yoo J.-S."/>
            <person name="Hazuka C.D."/>
            <person name="Peterson K.E."/>
            <person name="Hsu S.-C."/>
            <person name="Scheller R.H."/>
        </authorList>
    </citation>
    <scope>IDENTIFICATION IN EXOCYST COMPLEX</scope>
    <scope>TISSUE SPECIFICITY</scope>
    <source>
        <tissue>Brain</tissue>
    </source>
</reference>
<reference key="4">
    <citation type="journal article" date="2003" name="Hybrid. Hybridomics">
        <title>Immunological characterization of exocyst complex subunits in cell differentiation.</title>
        <authorList>
            <person name="Wang S."/>
            <person name="Hsu S.C."/>
        </authorList>
    </citation>
    <scope>SUBCELLULAR LOCATION</scope>
    <scope>INTERACTION WITH EXOC8</scope>
</reference>
<reference key="5">
    <citation type="journal article" date="2005" name="Neuropharmacology">
        <title>The glycine transporter GLYT1 interacts with Sec3, a component of the exocyst complex.</title>
        <authorList>
            <person name="Cubelos B."/>
            <person name="Gimenez C."/>
            <person name="Zafra F."/>
        </authorList>
    </citation>
    <scope>INTERACTION WITH SLC6A9</scope>
</reference>
<reference key="6">
    <citation type="journal article" date="2007" name="J. Biol. Chem.">
        <title>MyRIP anchors protein kinase A to the exocyst complex.</title>
        <authorList>
            <person name="Goehring A.S."/>
            <person name="Pedroja B.S."/>
            <person name="Hinke S.A."/>
            <person name="Langeberg L.K."/>
            <person name="Scott J.D."/>
        </authorList>
    </citation>
    <scope>INTERACTION WITH MYRIP</scope>
</reference>
<evidence type="ECO:0000250" key="1">
    <source>
        <dbReference type="UniProtKB" id="O60645"/>
    </source>
</evidence>
<evidence type="ECO:0000250" key="2">
    <source>
        <dbReference type="UniProtKB" id="Q6KAR6"/>
    </source>
</evidence>
<evidence type="ECO:0000255" key="3"/>
<evidence type="ECO:0000269" key="4">
    <source>
    </source>
</evidence>
<evidence type="ECO:0000269" key="5">
    <source>
    </source>
</evidence>
<evidence type="ECO:0000269" key="6">
    <source>
    </source>
</evidence>
<evidence type="ECO:0000269" key="7">
    <source>
    </source>
</evidence>
<evidence type="ECO:0000305" key="8"/>
<keyword id="KW-0007">Acetylation</keyword>
<keyword id="KW-0966">Cell projection</keyword>
<keyword id="KW-0175">Coiled coil</keyword>
<keyword id="KW-0963">Cytoplasm</keyword>
<keyword id="KW-0903">Direct protein sequencing</keyword>
<keyword id="KW-0268">Exocytosis</keyword>
<keyword id="KW-0333">Golgi apparatus</keyword>
<keyword id="KW-0653">Protein transport</keyword>
<keyword id="KW-1185">Reference proteome</keyword>
<keyword id="KW-0813">Transport</keyword>
<feature type="chain" id="PRO_0000118927" description="Exocyst complex component 3">
    <location>
        <begin position="1"/>
        <end position="755"/>
    </location>
</feature>
<feature type="coiled-coil region" evidence="3">
    <location>
        <begin position="34"/>
        <end position="62"/>
    </location>
</feature>
<feature type="coiled-coil region" evidence="3">
    <location>
        <begin position="618"/>
        <end position="649"/>
    </location>
</feature>
<feature type="modified residue" description="N6-acetyllysine" evidence="1">
    <location>
        <position position="38"/>
    </location>
</feature>